<accession>Q667I7</accession>
<sequence length="893" mass="103172">MSDNHTEHSLSLTLTPTISEQPVLPSTYLDSDINCPILKQRLDAFQRWQAEAFNSGTSAEVLIAARSDYIDHLLQRLWTFYGFDNVPETALVAVGGYGRGELHPLSDIDVLVLSKQRLNDEHAQRVGQLITLLWDLKLEVGHSVRTLEECLLEGLADLTIATNMIESRLICGDVALFLQMQKHIFSDSFWPSPQFFHAKVVEQQERHKRYHGTSYNLEPDIKSSPGGLRDIHTLLWVARRHFGATSLSEMVDFGFLTNAERNELNESQSFLWRIRFALHLVLTRYDNRLLFDRQLSVAQLLRYEGEGNEPVEHMMKDFYRMTRRVSELNNMLLQLFDEAILALEANEKPRPLDEEFQLRGDLIDLRDENLFVRQPEAIMRMFYLMVRNQDIKGIYSTTVRRLRHARRHLKAPLCHIPEARKLFMAILRHPGAVSRALLPMHRHSVLWAYMPQWGSIVGQMQFDLFHAYTVDEHTIRVLLKIESFADEDTRPRHPLCVELYPRLPQPELLLLAALFHDIAKGRGGDHSILGAHDAVEFAEQHGLNSRESQLVAWLVRCHLLMSVTAQRRDIQDPAVIQQFSAEVQSETRLRYLVSLTVADICATNENLWNSWKQSLLRELYFATEKQLRRGMQNSPDLRERVRHHRLQALALLRMDNIDEEALHRIWSRCRADYFLRHSPNQLAWHARHLLEHDSTKPLVLVSRQATRGGTEIFIWSPDRPSLFAAVVGELDRRNLSVHDAQIFTNRDGMAMDTFIVLEPDGSPLAQDRHPIISHALQQAINRSDYQHPPRVRRLSPKLRHFSVPTEANFLPTHNERRTYLELIALDQPGLLARVGKIFADLGLSLHSARITTIGERVEDLFVLADKDRRALSLETRRELAQRLADTLNPNDKL</sequence>
<dbReference type="EC" id="2.7.7.59" evidence="1"/>
<dbReference type="EC" id="3.1.4.-" evidence="1"/>
<dbReference type="EMBL" id="BX936398">
    <property type="protein sequence ID" value="CAH22243.1"/>
    <property type="molecule type" value="Genomic_DNA"/>
</dbReference>
<dbReference type="RefSeq" id="WP_011192863.1">
    <property type="nucleotide sequence ID" value="NC_006155.1"/>
</dbReference>
<dbReference type="SMR" id="Q667I7"/>
<dbReference type="GeneID" id="49784976"/>
<dbReference type="KEGG" id="ypo:BZ17_3616"/>
<dbReference type="KEGG" id="yps:YPTB3005"/>
<dbReference type="PATRIC" id="fig|273123.14.peg.3796"/>
<dbReference type="Proteomes" id="UP000001011">
    <property type="component" value="Chromosome"/>
</dbReference>
<dbReference type="GO" id="GO:0008773">
    <property type="term" value="F:[protein-PII] uridylyltransferase activity"/>
    <property type="evidence" value="ECO:0007669"/>
    <property type="project" value="UniProtKB-UniRule"/>
</dbReference>
<dbReference type="GO" id="GO:0008081">
    <property type="term" value="F:phosphoric diester hydrolase activity"/>
    <property type="evidence" value="ECO:0007669"/>
    <property type="project" value="UniProtKB-UniRule"/>
</dbReference>
<dbReference type="GO" id="GO:0006808">
    <property type="term" value="P:regulation of nitrogen utilization"/>
    <property type="evidence" value="ECO:0007669"/>
    <property type="project" value="UniProtKB-UniRule"/>
</dbReference>
<dbReference type="CDD" id="cd04899">
    <property type="entry name" value="ACT_ACR-UUR-like_2"/>
    <property type="match status" value="1"/>
</dbReference>
<dbReference type="CDD" id="cd04900">
    <property type="entry name" value="ACT_UUR-like_1"/>
    <property type="match status" value="1"/>
</dbReference>
<dbReference type="CDD" id="cd00077">
    <property type="entry name" value="HDc"/>
    <property type="match status" value="1"/>
</dbReference>
<dbReference type="CDD" id="cd05401">
    <property type="entry name" value="NT_GlnE_GlnD_like"/>
    <property type="match status" value="1"/>
</dbReference>
<dbReference type="FunFam" id="1.10.3210.10:FF:000005">
    <property type="entry name" value="Bifunctional uridylyltransferase/uridylyl-removing enzyme"/>
    <property type="match status" value="1"/>
</dbReference>
<dbReference type="Gene3D" id="1.10.3210.10">
    <property type="entry name" value="Hypothetical protein af1432"/>
    <property type="match status" value="1"/>
</dbReference>
<dbReference type="HAMAP" id="MF_00277">
    <property type="entry name" value="PII_uridylyl_transf"/>
    <property type="match status" value="1"/>
</dbReference>
<dbReference type="InterPro" id="IPR045865">
    <property type="entry name" value="ACT-like_dom_sf"/>
</dbReference>
<dbReference type="InterPro" id="IPR002912">
    <property type="entry name" value="ACT_dom"/>
</dbReference>
<dbReference type="InterPro" id="IPR003607">
    <property type="entry name" value="HD/PDEase_dom"/>
</dbReference>
<dbReference type="InterPro" id="IPR006674">
    <property type="entry name" value="HD_domain"/>
</dbReference>
<dbReference type="InterPro" id="IPR043519">
    <property type="entry name" value="NT_sf"/>
</dbReference>
<dbReference type="InterPro" id="IPR013546">
    <property type="entry name" value="PII_UdlTrfase/GS_AdlTrfase"/>
</dbReference>
<dbReference type="InterPro" id="IPR002934">
    <property type="entry name" value="Polymerase_NTP_transf_dom"/>
</dbReference>
<dbReference type="InterPro" id="IPR010043">
    <property type="entry name" value="UTase/UR"/>
</dbReference>
<dbReference type="NCBIfam" id="NF002487">
    <property type="entry name" value="PRK01759.1"/>
    <property type="match status" value="1"/>
</dbReference>
<dbReference type="NCBIfam" id="NF003448">
    <property type="entry name" value="PRK05007.1"/>
    <property type="match status" value="1"/>
</dbReference>
<dbReference type="NCBIfam" id="TIGR01693">
    <property type="entry name" value="UTase_glnD"/>
    <property type="match status" value="1"/>
</dbReference>
<dbReference type="PANTHER" id="PTHR47320">
    <property type="entry name" value="BIFUNCTIONAL URIDYLYLTRANSFERASE/URIDYLYL-REMOVING ENZYME"/>
    <property type="match status" value="1"/>
</dbReference>
<dbReference type="PANTHER" id="PTHR47320:SF1">
    <property type="entry name" value="BIFUNCTIONAL URIDYLYLTRANSFERASE_URIDYLYL-REMOVING ENZYME"/>
    <property type="match status" value="1"/>
</dbReference>
<dbReference type="Pfam" id="PF01842">
    <property type="entry name" value="ACT"/>
    <property type="match status" value="1"/>
</dbReference>
<dbReference type="Pfam" id="PF08335">
    <property type="entry name" value="GlnD_UR_UTase"/>
    <property type="match status" value="1"/>
</dbReference>
<dbReference type="Pfam" id="PF01966">
    <property type="entry name" value="HD"/>
    <property type="match status" value="1"/>
</dbReference>
<dbReference type="Pfam" id="PF01909">
    <property type="entry name" value="NTP_transf_2"/>
    <property type="match status" value="1"/>
</dbReference>
<dbReference type="PIRSF" id="PIRSF006288">
    <property type="entry name" value="PII_uridyltransf"/>
    <property type="match status" value="1"/>
</dbReference>
<dbReference type="SMART" id="SM00471">
    <property type="entry name" value="HDc"/>
    <property type="match status" value="1"/>
</dbReference>
<dbReference type="SUPFAM" id="SSF55021">
    <property type="entry name" value="ACT-like"/>
    <property type="match status" value="2"/>
</dbReference>
<dbReference type="SUPFAM" id="SSF109604">
    <property type="entry name" value="HD-domain/PDEase-like"/>
    <property type="match status" value="1"/>
</dbReference>
<dbReference type="SUPFAM" id="SSF81301">
    <property type="entry name" value="Nucleotidyltransferase"/>
    <property type="match status" value="1"/>
</dbReference>
<dbReference type="SUPFAM" id="SSF81593">
    <property type="entry name" value="Nucleotidyltransferase substrate binding subunit/domain"/>
    <property type="match status" value="1"/>
</dbReference>
<dbReference type="SUPFAM" id="SSF81891">
    <property type="entry name" value="Poly A polymerase C-terminal region-like"/>
    <property type="match status" value="1"/>
</dbReference>
<dbReference type="PROSITE" id="PS51671">
    <property type="entry name" value="ACT"/>
    <property type="match status" value="2"/>
</dbReference>
<dbReference type="PROSITE" id="PS51831">
    <property type="entry name" value="HD"/>
    <property type="match status" value="1"/>
</dbReference>
<evidence type="ECO:0000255" key="1">
    <source>
        <dbReference type="HAMAP-Rule" id="MF_00277"/>
    </source>
</evidence>
<evidence type="ECO:0000255" key="2">
    <source>
        <dbReference type="PROSITE-ProRule" id="PRU01175"/>
    </source>
</evidence>
<keyword id="KW-0378">Hydrolase</keyword>
<keyword id="KW-0460">Magnesium</keyword>
<keyword id="KW-0511">Multifunctional enzyme</keyword>
<keyword id="KW-0548">Nucleotidyltransferase</keyword>
<keyword id="KW-0677">Repeat</keyword>
<keyword id="KW-0808">Transferase</keyword>
<name>GLND_YERPS</name>
<protein>
    <recommendedName>
        <fullName evidence="1">Bifunctional uridylyltransferase/uridylyl-removing enzyme</fullName>
        <shortName evidence="1">UTase/UR</shortName>
    </recommendedName>
    <alternativeName>
        <fullName evidence="1">Bifunctional [protein-PII] modification enzyme</fullName>
    </alternativeName>
    <alternativeName>
        <fullName evidence="1">Bifunctional nitrogen sensor protein</fullName>
    </alternativeName>
    <domain>
        <recommendedName>
            <fullName evidence="1">[Protein-PII] uridylyltransferase</fullName>
            <shortName evidence="1">PII uridylyltransferase</shortName>
            <shortName evidence="1">UTase</shortName>
            <ecNumber evidence="1">2.7.7.59</ecNumber>
        </recommendedName>
    </domain>
    <domain>
        <recommendedName>
            <fullName evidence="1">[Protein-PII]-UMP uridylyl-removing enzyme</fullName>
            <shortName evidence="1">UR</shortName>
            <ecNumber evidence="1">3.1.4.-</ecNumber>
        </recommendedName>
    </domain>
</protein>
<comment type="function">
    <text evidence="1">Modifies, by uridylylation and deuridylylation, the PII regulatory proteins (GlnB and homologs), in response to the nitrogen status of the cell that GlnD senses through the glutamine level. Under low glutamine levels, catalyzes the conversion of the PII proteins and UTP to PII-UMP and PPi, while under higher glutamine levels, GlnD hydrolyzes PII-UMP to PII and UMP (deuridylylation). Thus, controls uridylylation state and activity of the PII proteins, and plays an important role in the regulation of nitrogen assimilation and metabolism.</text>
</comment>
<comment type="catalytic activity">
    <reaction evidence="1">
        <text>[protein-PII]-L-tyrosine + UTP = [protein-PII]-uridylyl-L-tyrosine + diphosphate</text>
        <dbReference type="Rhea" id="RHEA:13673"/>
        <dbReference type="Rhea" id="RHEA-COMP:12147"/>
        <dbReference type="Rhea" id="RHEA-COMP:12148"/>
        <dbReference type="ChEBI" id="CHEBI:33019"/>
        <dbReference type="ChEBI" id="CHEBI:46398"/>
        <dbReference type="ChEBI" id="CHEBI:46858"/>
        <dbReference type="ChEBI" id="CHEBI:90602"/>
        <dbReference type="EC" id="2.7.7.59"/>
    </reaction>
</comment>
<comment type="catalytic activity">
    <reaction evidence="1">
        <text>[protein-PII]-uridylyl-L-tyrosine + H2O = [protein-PII]-L-tyrosine + UMP + H(+)</text>
        <dbReference type="Rhea" id="RHEA:48600"/>
        <dbReference type="Rhea" id="RHEA-COMP:12147"/>
        <dbReference type="Rhea" id="RHEA-COMP:12148"/>
        <dbReference type="ChEBI" id="CHEBI:15377"/>
        <dbReference type="ChEBI" id="CHEBI:15378"/>
        <dbReference type="ChEBI" id="CHEBI:46858"/>
        <dbReference type="ChEBI" id="CHEBI:57865"/>
        <dbReference type="ChEBI" id="CHEBI:90602"/>
    </reaction>
</comment>
<comment type="cofactor">
    <cofactor evidence="1">
        <name>Mg(2+)</name>
        <dbReference type="ChEBI" id="CHEBI:18420"/>
    </cofactor>
</comment>
<comment type="activity regulation">
    <text evidence="1">Uridylyltransferase (UTase) activity is inhibited by glutamine, while glutamine activates uridylyl-removing (UR) activity.</text>
</comment>
<comment type="domain">
    <text evidence="1">Has four distinct domains: an N-terminal nucleotidyltransferase (NT) domain responsible for UTase activity, a central HD domain that encodes UR activity, and two C-terminal ACT domains that seem to have a role in glutamine sensing.</text>
</comment>
<comment type="similarity">
    <text evidence="1">Belongs to the GlnD family.</text>
</comment>
<proteinExistence type="inferred from homology"/>
<feature type="chain" id="PRO_0000231699" description="Bifunctional uridylyltransferase/uridylyl-removing enzyme">
    <location>
        <begin position="1"/>
        <end position="893"/>
    </location>
</feature>
<feature type="domain" description="HD" evidence="2">
    <location>
        <begin position="470"/>
        <end position="592"/>
    </location>
</feature>
<feature type="domain" description="ACT 1" evidence="1">
    <location>
        <begin position="711"/>
        <end position="793"/>
    </location>
</feature>
<feature type="domain" description="ACT 2" evidence="1">
    <location>
        <begin position="819"/>
        <end position="893"/>
    </location>
</feature>
<feature type="region of interest" description="Uridylyltransferase">
    <location>
        <begin position="1"/>
        <end position="351"/>
    </location>
</feature>
<feature type="region of interest" description="Uridylyl-removing">
    <location>
        <begin position="352"/>
        <end position="710"/>
    </location>
</feature>
<organism>
    <name type="scientific">Yersinia pseudotuberculosis serotype I (strain IP32953)</name>
    <dbReference type="NCBI Taxonomy" id="273123"/>
    <lineage>
        <taxon>Bacteria</taxon>
        <taxon>Pseudomonadati</taxon>
        <taxon>Pseudomonadota</taxon>
        <taxon>Gammaproteobacteria</taxon>
        <taxon>Enterobacterales</taxon>
        <taxon>Yersiniaceae</taxon>
        <taxon>Yersinia</taxon>
    </lineage>
</organism>
<reference key="1">
    <citation type="journal article" date="2004" name="Proc. Natl. Acad. Sci. U.S.A.">
        <title>Insights into the evolution of Yersinia pestis through whole-genome comparison with Yersinia pseudotuberculosis.</title>
        <authorList>
            <person name="Chain P.S.G."/>
            <person name="Carniel E."/>
            <person name="Larimer F.W."/>
            <person name="Lamerdin J."/>
            <person name="Stoutland P.O."/>
            <person name="Regala W.M."/>
            <person name="Georgescu A.M."/>
            <person name="Vergez L.M."/>
            <person name="Land M.L."/>
            <person name="Motin V.L."/>
            <person name="Brubaker R.R."/>
            <person name="Fowler J."/>
            <person name="Hinnebusch J."/>
            <person name="Marceau M."/>
            <person name="Medigue C."/>
            <person name="Simonet M."/>
            <person name="Chenal-Francisque V."/>
            <person name="Souza B."/>
            <person name="Dacheux D."/>
            <person name="Elliott J.M."/>
            <person name="Derbise A."/>
            <person name="Hauser L.J."/>
            <person name="Garcia E."/>
        </authorList>
    </citation>
    <scope>NUCLEOTIDE SEQUENCE [LARGE SCALE GENOMIC DNA]</scope>
    <source>
        <strain>IP32953</strain>
    </source>
</reference>
<gene>
    <name evidence="1" type="primary">glnD</name>
    <name type="ordered locus">YPTB3005</name>
</gene>